<dbReference type="EMBL" id="AY693357">
    <property type="protein sequence ID" value="AAT93376.1"/>
    <property type="molecule type" value="Genomic_DNA"/>
</dbReference>
<dbReference type="EMBL" id="Z75107">
    <property type="protein sequence ID" value="CAA99413.1"/>
    <property type="molecule type" value="Genomic_DNA"/>
</dbReference>
<dbReference type="PIR" id="S67092">
    <property type="entry name" value="S67092"/>
</dbReference>
<dbReference type="STRING" id="4932.YOR200W"/>
<dbReference type="PaxDb" id="4932-YOR200W"/>
<dbReference type="EnsemblFungi" id="YOR200W_mRNA">
    <property type="protein sequence ID" value="YOR200W"/>
    <property type="gene ID" value="YOR200W"/>
</dbReference>
<dbReference type="AGR" id="SGD:S000005726"/>
<dbReference type="SGD" id="S000005726">
    <property type="gene designation" value="YOR200W"/>
</dbReference>
<dbReference type="HOGENOM" id="CLU_1918720_0_0_1"/>
<protein>
    <recommendedName>
        <fullName>Putative uncharacterized protein YOR200W</fullName>
    </recommendedName>
</protein>
<comment type="miscellaneous">
    <text evidence="1">Partially overlaps MRM1 and YOR199W.</text>
</comment>
<comment type="caution">
    <text evidence="2">Product of a dubious gene prediction unlikely to encode a functional protein. Because of that it is not part of the S.cerevisiae S288c complete/reference proteome set.</text>
</comment>
<organism>
    <name type="scientific">Saccharomyces cerevisiae (strain ATCC 204508 / S288c)</name>
    <name type="common">Baker's yeast</name>
    <dbReference type="NCBI Taxonomy" id="559292"/>
    <lineage>
        <taxon>Eukaryota</taxon>
        <taxon>Fungi</taxon>
        <taxon>Dikarya</taxon>
        <taxon>Ascomycota</taxon>
        <taxon>Saccharomycotina</taxon>
        <taxon>Saccharomycetes</taxon>
        <taxon>Saccharomycetales</taxon>
        <taxon>Saccharomycetaceae</taxon>
        <taxon>Saccharomyces</taxon>
    </lineage>
</organism>
<reference key="1">
    <citation type="journal article" date="1997" name="Nature">
        <title>The nucleotide sequence of Saccharomyces cerevisiae chromosome XV.</title>
        <authorList>
            <person name="Dujon B."/>
            <person name="Albermann K."/>
            <person name="Aldea M."/>
            <person name="Alexandraki D."/>
            <person name="Ansorge W."/>
            <person name="Arino J."/>
            <person name="Benes V."/>
            <person name="Bohn C."/>
            <person name="Bolotin-Fukuhara M."/>
            <person name="Bordonne R."/>
            <person name="Boyer J."/>
            <person name="Camasses A."/>
            <person name="Casamayor A."/>
            <person name="Casas C."/>
            <person name="Cheret G."/>
            <person name="Cziepluch C."/>
            <person name="Daignan-Fornier B."/>
            <person name="Dang V.-D."/>
            <person name="de Haan M."/>
            <person name="Delius H."/>
            <person name="Durand P."/>
            <person name="Fairhead C."/>
            <person name="Feldmann H."/>
            <person name="Gaillon L."/>
            <person name="Galisson F."/>
            <person name="Gamo F.-J."/>
            <person name="Gancedo C."/>
            <person name="Goffeau A."/>
            <person name="Goulding S.E."/>
            <person name="Grivell L.A."/>
            <person name="Habbig B."/>
            <person name="Hand N.J."/>
            <person name="Hani J."/>
            <person name="Hattenhorst U."/>
            <person name="Hebling U."/>
            <person name="Hernando Y."/>
            <person name="Herrero E."/>
            <person name="Heumann K."/>
            <person name="Hiesel R."/>
            <person name="Hilger F."/>
            <person name="Hofmann B."/>
            <person name="Hollenberg C.P."/>
            <person name="Hughes B."/>
            <person name="Jauniaux J.-C."/>
            <person name="Kalogeropoulos A."/>
            <person name="Katsoulou C."/>
            <person name="Kordes E."/>
            <person name="Lafuente M.J."/>
            <person name="Landt O."/>
            <person name="Louis E.J."/>
            <person name="Maarse A.C."/>
            <person name="Madania A."/>
            <person name="Mannhaupt G."/>
            <person name="Marck C."/>
            <person name="Martin R.P."/>
            <person name="Mewes H.-W."/>
            <person name="Michaux G."/>
            <person name="Paces V."/>
            <person name="Parle-McDermott A.G."/>
            <person name="Pearson B.M."/>
            <person name="Perrin A."/>
            <person name="Pettersson B."/>
            <person name="Poch O."/>
            <person name="Pohl T.M."/>
            <person name="Poirey R."/>
            <person name="Portetelle D."/>
            <person name="Pujol A."/>
            <person name="Purnelle B."/>
            <person name="Ramezani Rad M."/>
            <person name="Rechmann S."/>
            <person name="Schwager C."/>
            <person name="Schweizer M."/>
            <person name="Sor F."/>
            <person name="Sterky F."/>
            <person name="Tarassov I.A."/>
            <person name="Teodoru C."/>
            <person name="Tettelin H."/>
            <person name="Thierry A."/>
            <person name="Tobiasch E."/>
            <person name="Tzermia M."/>
            <person name="Uhlen M."/>
            <person name="Unseld M."/>
            <person name="Valens M."/>
            <person name="Vandenbol M."/>
            <person name="Vetter I."/>
            <person name="Vlcek C."/>
            <person name="Voet M."/>
            <person name="Volckaert G."/>
            <person name="Voss H."/>
            <person name="Wambutt R."/>
            <person name="Wedler H."/>
            <person name="Wiemann S."/>
            <person name="Winsor B."/>
            <person name="Wolfe K.H."/>
            <person name="Zollner A."/>
            <person name="Zumstein E."/>
            <person name="Kleine K."/>
        </authorList>
    </citation>
    <scope>NUCLEOTIDE SEQUENCE [LARGE SCALE GENOMIC DNA]</scope>
    <source>
        <strain>ATCC 204508 / S288c</strain>
    </source>
</reference>
<reference key="2">
    <citation type="journal article" date="2014" name="G3 (Bethesda)">
        <title>The reference genome sequence of Saccharomyces cerevisiae: Then and now.</title>
        <authorList>
            <person name="Engel S.R."/>
            <person name="Dietrich F.S."/>
            <person name="Fisk D.G."/>
            <person name="Binkley G."/>
            <person name="Balakrishnan R."/>
            <person name="Costanzo M.C."/>
            <person name="Dwight S.S."/>
            <person name="Hitz B.C."/>
            <person name="Karra K."/>
            <person name="Nash R.S."/>
            <person name="Weng S."/>
            <person name="Wong E.D."/>
            <person name="Lloyd P."/>
            <person name="Skrzypek M.S."/>
            <person name="Miyasato S.R."/>
            <person name="Simison M."/>
            <person name="Cherry J.M."/>
        </authorList>
    </citation>
    <scope>GENOME REANNOTATION</scope>
    <source>
        <strain>ATCC 204508 / S288c</strain>
    </source>
</reference>
<reference key="3">
    <citation type="journal article" date="2007" name="Genome Res.">
        <title>Approaching a complete repository of sequence-verified protein-encoding clones for Saccharomyces cerevisiae.</title>
        <authorList>
            <person name="Hu Y."/>
            <person name="Rolfs A."/>
            <person name="Bhullar B."/>
            <person name="Murthy T.V.S."/>
            <person name="Zhu C."/>
            <person name="Berger M.F."/>
            <person name="Camargo A.A."/>
            <person name="Kelley F."/>
            <person name="McCarron S."/>
            <person name="Jepson D."/>
            <person name="Richardson A."/>
            <person name="Raphael J."/>
            <person name="Moreira D."/>
            <person name="Taycher E."/>
            <person name="Zuo D."/>
            <person name="Mohr S."/>
            <person name="Kane M.F."/>
            <person name="Williamson J."/>
            <person name="Simpson A.J.G."/>
            <person name="Bulyk M.L."/>
            <person name="Harlow E."/>
            <person name="Marsischky G."/>
            <person name="Kolodner R.D."/>
            <person name="LaBaer J."/>
        </authorList>
    </citation>
    <scope>NUCLEOTIDE SEQUENCE [GENOMIC DNA]</scope>
    <source>
        <strain>ATCC 204508 / S288c</strain>
    </source>
</reference>
<evidence type="ECO:0000305" key="1"/>
<evidence type="ECO:0000305" key="2">
    <source>
    </source>
</evidence>
<proteinExistence type="uncertain"/>
<accession>Q08620</accession>
<name>YO200_YEAST</name>
<sequence length="132" mass="14669">MYNVYRLIMYVCATLYDGYLQVRILSINNAVATLTFSESTMGSGARLPFSMPPKGISTKKSLLIFKFVLTPWLSFPTTRTTGSSLHNPFKSCMLIVFPTVYFSDVALAKWLVINVQPPISCDLVKNSNGLST</sequence>
<gene>
    <name type="ordered locus">YOR200W</name>
    <name type="ORF">O4824</name>
</gene>
<feature type="chain" id="PRO_0000299723" description="Putative uncharacterized protein YOR200W">
    <location>
        <begin position="1"/>
        <end position="132"/>
    </location>
</feature>